<keyword id="KW-0002">3D-structure</keyword>
<keyword id="KW-0067">ATP-binding</keyword>
<keyword id="KW-0997">Cell inner membrane</keyword>
<keyword id="KW-1003">Cell membrane</keyword>
<keyword id="KW-0186">Copper</keyword>
<keyword id="KW-0187">Copper transport</keyword>
<keyword id="KW-0406">Ion transport</keyword>
<keyword id="KW-0460">Magnesium</keyword>
<keyword id="KW-0472">Membrane</keyword>
<keyword id="KW-0479">Metal-binding</keyword>
<keyword id="KW-0547">Nucleotide-binding</keyword>
<keyword id="KW-0597">Phosphoprotein</keyword>
<keyword id="KW-1185">Reference proteome</keyword>
<keyword id="KW-1278">Translocase</keyword>
<keyword id="KW-0812">Transmembrane</keyword>
<keyword id="KW-1133">Transmembrane helix</keyword>
<keyword id="KW-0813">Transport</keyword>
<reference key="1">
    <citation type="journal article" date="2004" name="Science">
        <title>The genomic sequence of the accidental pathogen Legionella pneumophila.</title>
        <authorList>
            <person name="Chien M."/>
            <person name="Morozova I."/>
            <person name="Shi S."/>
            <person name="Sheng H."/>
            <person name="Chen J."/>
            <person name="Gomez S.M."/>
            <person name="Asamani G."/>
            <person name="Hill K."/>
            <person name="Nuara J."/>
            <person name="Feder M."/>
            <person name="Rineer J."/>
            <person name="Greenberg J.J."/>
            <person name="Steshenko V."/>
            <person name="Park S.H."/>
            <person name="Zhao B."/>
            <person name="Teplitskaya E."/>
            <person name="Edwards J.R."/>
            <person name="Pampou S."/>
            <person name="Georghiou A."/>
            <person name="Chou I.-C."/>
            <person name="Iannuccilli W."/>
            <person name="Ulz M.E."/>
            <person name="Kim D.H."/>
            <person name="Geringer-Sameth A."/>
            <person name="Goldsberry C."/>
            <person name="Morozov P."/>
            <person name="Fischer S.G."/>
            <person name="Segal G."/>
            <person name="Qu X."/>
            <person name="Rzhetsky A."/>
            <person name="Zhang P."/>
            <person name="Cayanis E."/>
            <person name="De Jong P.J."/>
            <person name="Ju J."/>
            <person name="Kalachikov S."/>
            <person name="Shuman H.A."/>
            <person name="Russo J.J."/>
        </authorList>
    </citation>
    <scope>NUCLEOTIDE SEQUENCE [LARGE SCALE GENOMIC DNA]</scope>
    <source>
        <strain>Philadelphia 1 / ATCC 33152 / DSM 7513</strain>
    </source>
</reference>
<reference key="2">
    <citation type="journal article" date="2022" name="Biochim. Biophys. Acta">
        <title>Functional characterization of Legionella pneumophila Cu+ transport ATPase. The activation by Cu+ and ATP.</title>
        <authorList>
            <person name="Placenti M.A."/>
            <person name="Roman E.A."/>
            <person name="Gonzalez Flecha F.L."/>
            <person name="Gonzalez-Lebrero R.M."/>
        </authorList>
    </citation>
    <scope>FUNCTION</scope>
    <scope>CATALYTIC ACTIVITY</scope>
    <scope>COFACTOR</scope>
    <scope>ACTIVITY REGULATION</scope>
    <scope>BIOPHYSICOCHEMICAL PROPERTIES</scope>
    <scope>MUTAGENESIS OF ASP-426</scope>
    <scope>REACTION MECHANISM</scope>
    <source>
        <strain evidence="9">Philadelphia 1 / ATCC 33152 / DSM 7513</strain>
    </source>
</reference>
<reference evidence="16" key="3">
    <citation type="journal article" date="2011" name="Nature">
        <title>Crystal structure of a copper-transporting PIB-type ATPase.</title>
        <authorList>
            <person name="Gourdon P."/>
            <person name="Liu X.Y."/>
            <person name="Skjorringe T."/>
            <person name="Morth J.P."/>
            <person name="Moller L.B."/>
            <person name="Pedersen B.P."/>
            <person name="Nissen P."/>
        </authorList>
    </citation>
    <scope>X-RAY CRYSTALLOGRAPHY (3.20 ANGSTROMS)</scope>
    <scope>FUNCTION AS AN ATPASE</scope>
</reference>
<reference evidence="18" key="4">
    <citation type="submission" date="2013-03" db="PDB data bank">
        <title>ATPase crystal structure with bound phosphate analogue.</title>
        <authorList>
            <person name="Mattle D."/>
            <person name="Drachmann N.D."/>
            <person name="Liu X.Y."/>
            <person name="Gourdon P."/>
            <person name="Pedersen B.P."/>
            <person name="Morth P."/>
            <person name="Wang J."/>
            <person name="Nissen P."/>
        </authorList>
    </citation>
    <scope>X-RAY CRYSTALLOGRAPHY (3.58 ANGSTROMS) IN COMPLEX WITH MAGNESIUM AND PHOSPHATE ANALOG</scope>
    <scope>ACTIVE SITE</scope>
    <source>
        <strain>Philadelphia 1 / ATCC 33152 / DSM 7513</strain>
    </source>
</reference>
<reference evidence="19" key="5">
    <citation type="submission" date="2013-07" db="PDB data bank">
        <title>Dephosphorylation of PIB-type Cu(I)-ATPases as studied by metallofluoride complexes.</title>
        <authorList>
            <person name="Mattle D."/>
            <person name="Drachmann N.D."/>
            <person name="Liu X.Y."/>
            <person name="Pedersen B.P."/>
            <person name="Morth J.P."/>
            <person name="Wang J."/>
            <person name="Gourdon P."/>
            <person name="Nissen P."/>
        </authorList>
    </citation>
    <scope>X-RAY CRYSTALLOGRAPHY (2.85 ANGSTROMS) IN COMPLEX WITH MAGNESIUM AND PHOSPHATE ANALOG</scope>
    <scope>ACTIVE SITE</scope>
    <source>
        <strain>Philadelphia 1 / ATCC 33152 / DSM 7513</strain>
    </source>
</reference>
<reference evidence="17" key="6">
    <citation type="journal article" date="2014" name="Nat. Struct. Mol. Biol.">
        <title>Copper-transporting P-type ATPases use a unique ion-release pathway.</title>
        <authorList>
            <person name="Andersson M."/>
            <person name="Mattle D."/>
            <person name="Sitsel O."/>
            <person name="Klymchuk T."/>
            <person name="Nielsen A.M."/>
            <person name="Moller L.B."/>
            <person name="White S.H."/>
            <person name="Nissen P."/>
            <person name="Gourdon P."/>
        </authorList>
    </citation>
    <scope>X-RAY CRYSTALLOGRAPHY (2.75 ANGSTROMS) IN COMPLEX WITH MAGNESIUM</scope>
    <scope>FUNCTION</scope>
    <scope>CATALYTIC ACTIVITY</scope>
    <scope>SUBCELLULAR LOCATION</scope>
    <scope>COPPER-BINDING SITES</scope>
    <scope>MUTAGENESIS OF PRO-94; MET-100; GLU-189; ASP-426; PRO-710; MET-711; ALA-714 AND MET-717</scope>
    <source>
        <strain>Philadelphia 1 / ATCC 33152 / DSM 7513</strain>
    </source>
</reference>
<name>COPA_LEGPH</name>
<gene>
    <name evidence="7" type="primary">copA</name>
    <name evidence="15" type="ordered locus">lpg1024</name>
</gene>
<feature type="chain" id="PRO_0000439348" description="Copper-exporting P-type ATPase">
    <location>
        <begin position="1"/>
        <end position="736"/>
    </location>
</feature>
<feature type="transmembrane region" description="Helical" evidence="1">
    <location>
        <begin position="85"/>
        <end position="105"/>
    </location>
</feature>
<feature type="transmembrane region" description="Helical" evidence="1">
    <location>
        <begin position="114"/>
        <end position="134"/>
    </location>
</feature>
<feature type="transmembrane region" description="Helical" evidence="1">
    <location>
        <begin position="149"/>
        <end position="169"/>
    </location>
</feature>
<feature type="transmembrane region" description="Helical" evidence="1">
    <location>
        <begin position="183"/>
        <end position="203"/>
    </location>
</feature>
<feature type="transmembrane region" description="Helical" evidence="1">
    <location>
        <begin position="341"/>
        <end position="361"/>
    </location>
</feature>
<feature type="transmembrane region" description="Helical" evidence="1">
    <location>
        <begin position="369"/>
        <end position="389"/>
    </location>
</feature>
<feature type="transmembrane region" description="Helical" evidence="1">
    <location>
        <begin position="682"/>
        <end position="702"/>
    </location>
</feature>
<feature type="transmembrane region" description="Helical" evidence="1">
    <location>
        <begin position="706"/>
        <end position="726"/>
    </location>
</feature>
<feature type="region of interest" description="Disordered" evidence="2">
    <location>
        <begin position="1"/>
        <end position="32"/>
    </location>
</feature>
<feature type="compositionally biased region" description="Basic residues" evidence="2">
    <location>
        <begin position="1"/>
        <end position="17"/>
    </location>
</feature>
<feature type="active site" description="4-aspartylphosphate intermediate" evidence="13 14">
    <location>
        <position position="426"/>
    </location>
</feature>
<feature type="binding site" evidence="3 5 6 17 18 19">
    <location>
        <position position="426"/>
    </location>
    <ligand>
        <name>Mg(2+)</name>
        <dbReference type="ChEBI" id="CHEBI:18420"/>
    </ligand>
</feature>
<feature type="binding site" evidence="3 5 6 17 18 19">
    <location>
        <position position="428"/>
    </location>
    <ligand>
        <name>Mg(2+)</name>
        <dbReference type="ChEBI" id="CHEBI:18420"/>
    </ligand>
</feature>
<feature type="binding site" evidence="3 5 6 17 18 19">
    <location>
        <position position="624"/>
    </location>
    <ligand>
        <name>Mg(2+)</name>
        <dbReference type="ChEBI" id="CHEBI:18420"/>
    </ligand>
</feature>
<feature type="site" description="Important for copper transport" evidence="8">
    <location>
        <position position="189"/>
    </location>
</feature>
<feature type="site" description="Important for copper transport" evidence="8">
    <location>
        <position position="382"/>
    </location>
</feature>
<feature type="site" description="Important for copper transport" evidence="8">
    <location>
        <position position="384"/>
    </location>
</feature>
<feature type="site" description="Important for copper transport" evidence="8">
    <location>
        <position position="717"/>
    </location>
</feature>
<feature type="mutagenesis site" description="Strong decrease in activity." evidence="3">
    <original>P</original>
    <variation>A</variation>
    <location>
        <position position="94"/>
    </location>
</feature>
<feature type="mutagenesis site" description="Decrease in activity." evidence="3">
    <original>M</original>
    <variation>E</variation>
    <location>
        <position position="100"/>
    </location>
</feature>
<feature type="mutagenesis site" description="Slight decrease in activity." evidence="3">
    <original>M</original>
    <variation>L</variation>
    <location>
        <position position="100"/>
    </location>
</feature>
<feature type="mutagenesis site" description="Strong decrease in activity." evidence="3">
    <original>E</original>
    <variation>N</variation>
    <location>
        <position position="189"/>
    </location>
</feature>
<feature type="mutagenesis site" description="Decrease in activity." evidence="3">
    <original>E</original>
    <variation>Q</variation>
    <location>
        <position position="189"/>
    </location>
</feature>
<feature type="mutagenesis site" description="Lack of activity. Loss of phosphorylation in the absence of Cu(+)." evidence="3 4">
    <original>D</original>
    <variation>N</variation>
    <location>
        <position position="426"/>
    </location>
</feature>
<feature type="mutagenesis site" description="Strong decrease in activity." evidence="3">
    <original>P</original>
    <variation>A</variation>
    <location>
        <position position="710"/>
    </location>
</feature>
<feature type="mutagenesis site" description="Strong decrease in activity." evidence="3">
    <original>M</original>
    <variation>L</variation>
    <location>
        <position position="711"/>
    </location>
</feature>
<feature type="mutagenesis site" description="Strong decrease in activity." evidence="3">
    <original>A</original>
    <variation>T</variation>
    <location>
        <position position="714"/>
    </location>
</feature>
<feature type="mutagenesis site" description="Strong decrease in activity." evidence="3">
    <original>M</original>
    <variation>V</variation>
    <location>
        <position position="717"/>
    </location>
</feature>
<feature type="strand" evidence="23">
    <location>
        <begin position="38"/>
        <end position="42"/>
    </location>
</feature>
<feature type="strand" evidence="23">
    <location>
        <begin position="45"/>
        <end position="55"/>
    </location>
</feature>
<feature type="turn" evidence="23">
    <location>
        <begin position="57"/>
        <end position="59"/>
    </location>
</feature>
<feature type="strand" evidence="23">
    <location>
        <begin position="64"/>
        <end position="68"/>
    </location>
</feature>
<feature type="helix" evidence="21">
    <location>
        <begin position="76"/>
        <end position="101"/>
    </location>
</feature>
<feature type="strand" evidence="21">
    <location>
        <begin position="106"/>
        <end position="108"/>
    </location>
</feature>
<feature type="helix" evidence="21">
    <location>
        <begin position="111"/>
        <end position="127"/>
    </location>
</feature>
<feature type="turn" evidence="21">
    <location>
        <begin position="128"/>
        <end position="130"/>
    </location>
</feature>
<feature type="helix" evidence="21">
    <location>
        <begin position="131"/>
        <end position="143"/>
    </location>
</feature>
<feature type="helix" evidence="21">
    <location>
        <begin position="148"/>
        <end position="168"/>
    </location>
</feature>
<feature type="helix" evidence="21">
    <location>
        <begin position="170"/>
        <end position="172"/>
    </location>
</feature>
<feature type="helix" evidence="22">
    <location>
        <begin position="175"/>
        <end position="177"/>
    </location>
</feature>
<feature type="strand" evidence="20">
    <location>
        <begin position="180"/>
        <end position="182"/>
    </location>
</feature>
<feature type="helix" evidence="21">
    <location>
        <begin position="188"/>
        <end position="217"/>
    </location>
</feature>
<feature type="strand" evidence="21">
    <location>
        <begin position="226"/>
        <end position="230"/>
    </location>
</feature>
<feature type="strand" evidence="22">
    <location>
        <begin position="232"/>
        <end position="234"/>
    </location>
</feature>
<feature type="strand" evidence="21">
    <location>
        <begin position="236"/>
        <end position="240"/>
    </location>
</feature>
<feature type="turn" evidence="22">
    <location>
        <begin position="241"/>
        <end position="243"/>
    </location>
</feature>
<feature type="strand" evidence="21">
    <location>
        <begin position="249"/>
        <end position="252"/>
    </location>
</feature>
<feature type="strand" evidence="20">
    <location>
        <begin position="254"/>
        <end position="257"/>
    </location>
</feature>
<feature type="strand" evidence="21">
    <location>
        <begin position="260"/>
        <end position="272"/>
    </location>
</feature>
<feature type="helix" evidence="21">
    <location>
        <begin position="274"/>
        <end position="277"/>
    </location>
</feature>
<feature type="strand" evidence="21">
    <location>
        <begin position="283"/>
        <end position="286"/>
    </location>
</feature>
<feature type="strand" evidence="20">
    <location>
        <begin position="296"/>
        <end position="299"/>
    </location>
</feature>
<feature type="strand" evidence="21">
    <location>
        <begin position="301"/>
        <end position="308"/>
    </location>
</feature>
<feature type="helix" evidence="21">
    <location>
        <begin position="310"/>
        <end position="312"/>
    </location>
</feature>
<feature type="helix" evidence="21">
    <location>
        <begin position="314"/>
        <end position="327"/>
    </location>
</feature>
<feature type="helix" evidence="21">
    <location>
        <begin position="335"/>
        <end position="361"/>
    </location>
</feature>
<feature type="strand" evidence="21">
    <location>
        <begin position="362"/>
        <end position="365"/>
    </location>
</feature>
<feature type="helix" evidence="21">
    <location>
        <begin position="366"/>
        <end position="381"/>
    </location>
</feature>
<feature type="helix" evidence="21">
    <location>
        <begin position="386"/>
        <end position="402"/>
    </location>
</feature>
<feature type="turn" evidence="21">
    <location>
        <begin position="403"/>
        <end position="405"/>
    </location>
</feature>
<feature type="strand" evidence="21">
    <location>
        <begin position="406"/>
        <end position="409"/>
    </location>
</feature>
<feature type="helix" evidence="21">
    <location>
        <begin position="411"/>
        <end position="417"/>
    </location>
</feature>
<feature type="strand" evidence="21">
    <location>
        <begin position="422"/>
        <end position="425"/>
    </location>
</feature>
<feature type="turn" evidence="21">
    <location>
        <begin position="427"/>
        <end position="430"/>
    </location>
</feature>
<feature type="strand" evidence="21">
    <location>
        <begin position="437"/>
        <end position="446"/>
    </location>
</feature>
<feature type="helix" evidence="21">
    <location>
        <begin position="448"/>
        <end position="459"/>
    </location>
</feature>
<feature type="helix" evidence="21">
    <location>
        <begin position="465"/>
        <end position="477"/>
    </location>
</feature>
<feature type="strand" evidence="21">
    <location>
        <begin position="484"/>
        <end position="488"/>
    </location>
</feature>
<feature type="turn" evidence="21">
    <location>
        <begin position="491"/>
        <end position="493"/>
    </location>
</feature>
<feature type="strand" evidence="21">
    <location>
        <begin position="494"/>
        <end position="499"/>
    </location>
</feature>
<feature type="strand" evidence="21">
    <location>
        <begin position="502"/>
        <end position="507"/>
    </location>
</feature>
<feature type="helix" evidence="21">
    <location>
        <begin position="509"/>
        <end position="515"/>
    </location>
</feature>
<feature type="helix" evidence="21">
    <location>
        <begin position="520"/>
        <end position="531"/>
    </location>
</feature>
<feature type="strand" evidence="21">
    <location>
        <begin position="535"/>
        <end position="541"/>
    </location>
</feature>
<feature type="strand" evidence="21">
    <location>
        <begin position="544"/>
        <end position="552"/>
    </location>
</feature>
<feature type="helix" evidence="21">
    <location>
        <begin position="559"/>
        <end position="568"/>
    </location>
</feature>
<feature type="strand" evidence="21">
    <location>
        <begin position="572"/>
        <end position="579"/>
    </location>
</feature>
<feature type="helix" evidence="21">
    <location>
        <begin position="581"/>
        <end position="590"/>
    </location>
</feature>
<feature type="strand" evidence="21">
    <location>
        <begin position="595"/>
        <end position="599"/>
    </location>
</feature>
<feature type="helix" evidence="21">
    <location>
        <begin position="602"/>
        <end position="614"/>
    </location>
</feature>
<feature type="strand" evidence="21">
    <location>
        <begin position="619"/>
        <end position="623"/>
    </location>
</feature>
<feature type="helix" evidence="21">
    <location>
        <begin position="626"/>
        <end position="628"/>
    </location>
</feature>
<feature type="helix" evidence="21">
    <location>
        <begin position="629"/>
        <end position="634"/>
    </location>
</feature>
<feature type="strand" evidence="21">
    <location>
        <begin position="635"/>
        <end position="641"/>
    </location>
</feature>
<feature type="helix" evidence="21">
    <location>
        <begin position="646"/>
        <end position="651"/>
    </location>
</feature>
<feature type="strand" evidence="21">
    <location>
        <begin position="653"/>
        <end position="656"/>
    </location>
</feature>
<feature type="helix" evidence="22">
    <location>
        <begin position="657"/>
        <end position="659"/>
    </location>
</feature>
<feature type="helix" evidence="21">
    <location>
        <begin position="662"/>
        <end position="697"/>
    </location>
</feature>
<feature type="turn" evidence="21">
    <location>
        <begin position="698"/>
        <end position="703"/>
    </location>
</feature>
<feature type="helix" evidence="21">
    <location>
        <begin position="710"/>
        <end position="728"/>
    </location>
</feature>
<feature type="helix" evidence="21">
    <location>
        <begin position="729"/>
        <end position="733"/>
    </location>
</feature>
<protein>
    <recommendedName>
        <fullName evidence="10">Copper-exporting P-type ATPase</fullName>
        <ecNumber evidence="3 4">7.2.2.8</ecNumber>
    </recommendedName>
    <alternativeName>
        <fullName>Copper-exporting P-type ATPase A</fullName>
    </alternativeName>
    <alternativeName>
        <fullName evidence="7">Copper-transporting PIB-type ATPase</fullName>
    </alternativeName>
    <alternativeName>
        <fullName evidence="9">Cu(+) transport ATPase</fullName>
    </alternativeName>
    <alternativeName>
        <fullName evidence="7">Cu(+)-ATPase LpCopA</fullName>
    </alternativeName>
    <alternativeName>
        <fullName evidence="9">LpCopA</fullName>
    </alternativeName>
</protein>
<accession>Q5ZWR1</accession>
<comment type="function">
    <text evidence="3 4 11">Couples the hydrolysis of ATP with the export of copper.</text>
</comment>
<comment type="catalytic activity">
    <reaction evidence="3 4">
        <text>Cu(+)(in) + ATP + H2O = Cu(+)(out) + ADP + phosphate + H(+)</text>
        <dbReference type="Rhea" id="RHEA:25792"/>
        <dbReference type="ChEBI" id="CHEBI:15377"/>
        <dbReference type="ChEBI" id="CHEBI:15378"/>
        <dbReference type="ChEBI" id="CHEBI:30616"/>
        <dbReference type="ChEBI" id="CHEBI:43474"/>
        <dbReference type="ChEBI" id="CHEBI:49552"/>
        <dbReference type="ChEBI" id="CHEBI:456216"/>
        <dbReference type="EC" id="7.2.2.8"/>
    </reaction>
</comment>
<comment type="cofactor">
    <cofactor evidence="4">
        <name>Mg(2+)</name>
        <dbReference type="ChEBI" id="CHEBI:18420"/>
    </cofactor>
</comment>
<comment type="activity regulation">
    <text evidence="4">Activated by phospholipids, Mg(2+) and Cu(+).</text>
</comment>
<comment type="biophysicochemical properties">
    <kinetics>
        <KM evidence="4">0.66 uM for ATP in conformational state E1 (at 37 degrees Celsius)</KM>
        <KM evidence="4">550 uM for ATP in conformational state E2 (at 37 degrees Celsius)</KM>
        <KM evidence="4">1.4 uM for Cu(+) 1 (at 37 degrees Celsius)</KM>
        <KM evidence="4">102.5 uM for Cu(+) 2 (at 37 degrees Celsius)</KM>
        <Vmax evidence="4">195.0 nmol/min/mg enzyme for the ATPase activity</Vmax>
        <text evidence="4">kcat is 248 min(-1) for the ATPase activity.</text>
    </kinetics>
    <phDependence>
        <text evidence="4">Optimum pH is 6.6-6.8.</text>
    </phDependence>
    <temperatureDependence>
        <text evidence="4">Optimum temperature is about 37 degrees Celsius.</text>
    </temperatureDependence>
</comment>
<comment type="subcellular location">
    <subcellularLocation>
        <location evidence="12">Cell inner membrane</location>
        <topology evidence="1">Multi-pass membrane protein</topology>
    </subcellularLocation>
</comment>
<comment type="similarity">
    <text evidence="10">Belongs to the cation transport ATPase (P-type) (TC 3.A.3) family. Type IB subfamily.</text>
</comment>
<organism>
    <name type="scientific">Legionella pneumophila subsp. pneumophila (strain Philadelphia 1 / ATCC 33152 / DSM 7513)</name>
    <dbReference type="NCBI Taxonomy" id="272624"/>
    <lineage>
        <taxon>Bacteria</taxon>
        <taxon>Pseudomonadati</taxon>
        <taxon>Pseudomonadota</taxon>
        <taxon>Gammaproteobacteria</taxon>
        <taxon>Legionellales</taxon>
        <taxon>Legionellaceae</taxon>
        <taxon>Legionella</taxon>
    </lineage>
</organism>
<evidence type="ECO:0000255" key="1"/>
<evidence type="ECO:0000256" key="2">
    <source>
        <dbReference type="SAM" id="MobiDB-lite"/>
    </source>
</evidence>
<evidence type="ECO:0000269" key="3">
    <source>
    </source>
</evidence>
<evidence type="ECO:0000269" key="4">
    <source>
    </source>
</evidence>
<evidence type="ECO:0000269" key="5">
    <source ref="4"/>
</evidence>
<evidence type="ECO:0000269" key="6">
    <source ref="5"/>
</evidence>
<evidence type="ECO:0000303" key="7">
    <source>
    </source>
</evidence>
<evidence type="ECO:0000303" key="8">
    <source>
    </source>
</evidence>
<evidence type="ECO:0000303" key="9">
    <source>
    </source>
</evidence>
<evidence type="ECO:0000305" key="10"/>
<evidence type="ECO:0000305" key="11">
    <source>
    </source>
</evidence>
<evidence type="ECO:0000305" key="12">
    <source>
    </source>
</evidence>
<evidence type="ECO:0000305" key="13">
    <source ref="4"/>
</evidence>
<evidence type="ECO:0000305" key="14">
    <source ref="5"/>
</evidence>
<evidence type="ECO:0000312" key="15">
    <source>
        <dbReference type="EMBL" id="AAU27110.1"/>
    </source>
</evidence>
<evidence type="ECO:0007744" key="16">
    <source>
        <dbReference type="PDB" id="3RFU"/>
    </source>
</evidence>
<evidence type="ECO:0007744" key="17">
    <source>
        <dbReference type="PDB" id="4BBJ"/>
    </source>
</evidence>
<evidence type="ECO:0007744" key="18">
    <source>
        <dbReference type="PDB" id="4BEV"/>
    </source>
</evidence>
<evidence type="ECO:0007744" key="19">
    <source>
        <dbReference type="PDB" id="4BYG"/>
    </source>
</evidence>
<evidence type="ECO:0007829" key="20">
    <source>
        <dbReference type="PDB" id="3RFU"/>
    </source>
</evidence>
<evidence type="ECO:0007829" key="21">
    <source>
        <dbReference type="PDB" id="4BBJ"/>
    </source>
</evidence>
<evidence type="ECO:0007829" key="22">
    <source>
        <dbReference type="PDB" id="4BYG"/>
    </source>
</evidence>
<evidence type="ECO:0007829" key="23">
    <source>
        <dbReference type="PDB" id="8OVL"/>
    </source>
</evidence>
<proteinExistence type="evidence at protein level"/>
<sequence>MKHDHHQGHTHSGKGHACHHEHNSPKTQQASSKMEGPIVYTCPMHPEIRQSAPGHCPLCGMALEPETVTVSEVVSPEYLDMRRRFWIALMLTIPVVILEMGGHGLKHFISGNGSSWIQLLLATPVVLWGGWPFFKRGWQSLKTGQLNMFTLIAMGIGVAWIYSMVAVLWPGVFPHAFRSQEGVVAVYFEAAAVITTLVLLGQVLELKAREQTGSAIRALLKLVPESAHRIKEDGSEEEVSLDNVAVGDLLRVRPGEKIPVDGEVQEGRSFVDESMVTGEPIPVAKEASAKVIGATINQTGSFVMKALHVGSDTMLARIVQMVSDAQRSRAPIQRLADTVSGWFVPAVILVAVLSFIVWALLGPQPALSYGLIAAVSVLIIACPCALGLATPMSIMVGVGKGAQSGVLIKNAEALERMEKVNTLVVDKTGTLTEGHPKLTRIVTDDFVEDNALALAAALEHQSEHPLANAIVHAAKEKGLSLGSVEAFEAPTGKGVVGQVDGHHVAIGNARLMQEHGGDNAPLFEKADELRGKGASVMFMAVDGKTVALLVVEDPIKSSTPETILELQQSGIEIVMLTGDSKRTAEAVAGTLGIKKVVAEIMPEDKSRIVSELKDKGLIVAMAGDGVNDAPALAKADIGIAMGTGTDVAIESAGVTLLHGDLRGIAKARRLSESTMSNIRQNLFFAFIYNVLGVPLAAGVLYPLTGLLLSPMIAAAAMALSSVSVIINALRLKRVTL</sequence>
<dbReference type="EC" id="7.2.2.8" evidence="3 4"/>
<dbReference type="EMBL" id="AE017354">
    <property type="protein sequence ID" value="AAU27110.1"/>
    <property type="molecule type" value="Genomic_DNA"/>
</dbReference>
<dbReference type="RefSeq" id="WP_010946759.1">
    <property type="nucleotide sequence ID" value="NC_002942.5"/>
</dbReference>
<dbReference type="RefSeq" id="YP_095057.1">
    <property type="nucleotide sequence ID" value="NC_002942.5"/>
</dbReference>
<dbReference type="PDB" id="3RFU">
    <property type="method" value="X-ray"/>
    <property type="resolution" value="3.20 A"/>
    <property type="chains" value="A/B/C/D=1-736"/>
</dbReference>
<dbReference type="PDB" id="4BBJ">
    <property type="method" value="X-ray"/>
    <property type="resolution" value="2.75 A"/>
    <property type="chains" value="A=1-736"/>
</dbReference>
<dbReference type="PDB" id="4BEV">
    <property type="method" value="X-ray"/>
    <property type="resolution" value="3.58 A"/>
    <property type="chains" value="A=1-736"/>
</dbReference>
<dbReference type="PDB" id="4BYG">
    <property type="method" value="X-ray"/>
    <property type="resolution" value="2.85 A"/>
    <property type="chains" value="A=1-736"/>
</dbReference>
<dbReference type="PDB" id="8OVL">
    <property type="method" value="NMR"/>
    <property type="chains" value="A=2-83"/>
</dbReference>
<dbReference type="PDBsum" id="3RFU"/>
<dbReference type="PDBsum" id="4BBJ"/>
<dbReference type="PDBsum" id="4BEV"/>
<dbReference type="PDBsum" id="4BYG"/>
<dbReference type="PDBsum" id="8OVL"/>
<dbReference type="SMR" id="Q5ZWR1"/>
<dbReference type="STRING" id="272624.lpg1024"/>
<dbReference type="PaxDb" id="272624-lpg1024"/>
<dbReference type="KEGG" id="lpn:lpg1024"/>
<dbReference type="PATRIC" id="fig|272624.6.peg.1064"/>
<dbReference type="eggNOG" id="COG2217">
    <property type="taxonomic scope" value="Bacteria"/>
</dbReference>
<dbReference type="HOGENOM" id="CLU_001771_0_3_6"/>
<dbReference type="OrthoDB" id="9814270at2"/>
<dbReference type="BRENDA" id="7.2.2.8">
    <property type="organism ID" value="14579"/>
</dbReference>
<dbReference type="EvolutionaryTrace" id="Q5ZWR1"/>
<dbReference type="Proteomes" id="UP000000609">
    <property type="component" value="Chromosome"/>
</dbReference>
<dbReference type="GO" id="GO:0005886">
    <property type="term" value="C:plasma membrane"/>
    <property type="evidence" value="ECO:0000305"/>
    <property type="project" value="UniProtKB"/>
</dbReference>
<dbReference type="GO" id="GO:0005524">
    <property type="term" value="F:ATP binding"/>
    <property type="evidence" value="ECO:0007669"/>
    <property type="project" value="UniProtKB-KW"/>
</dbReference>
<dbReference type="GO" id="GO:0016887">
    <property type="term" value="F:ATP hydrolysis activity"/>
    <property type="evidence" value="ECO:0007669"/>
    <property type="project" value="InterPro"/>
</dbReference>
<dbReference type="GO" id="GO:0005507">
    <property type="term" value="F:copper ion binding"/>
    <property type="evidence" value="ECO:0007669"/>
    <property type="project" value="TreeGrafter"/>
</dbReference>
<dbReference type="GO" id="GO:0000287">
    <property type="term" value="F:magnesium ion binding"/>
    <property type="evidence" value="ECO:0000314"/>
    <property type="project" value="UniProtKB"/>
</dbReference>
<dbReference type="GO" id="GO:0043682">
    <property type="term" value="F:P-type divalent copper transporter activity"/>
    <property type="evidence" value="ECO:0007669"/>
    <property type="project" value="TreeGrafter"/>
</dbReference>
<dbReference type="GO" id="GO:0140581">
    <property type="term" value="F:P-type monovalent copper transporter activity"/>
    <property type="evidence" value="ECO:0000314"/>
    <property type="project" value="UniProtKB"/>
</dbReference>
<dbReference type="GO" id="GO:0060003">
    <property type="term" value="P:copper ion export"/>
    <property type="evidence" value="ECO:0000314"/>
    <property type="project" value="UniProtKB"/>
</dbReference>
<dbReference type="GO" id="GO:0006878">
    <property type="term" value="P:intracellular copper ion homeostasis"/>
    <property type="evidence" value="ECO:0000314"/>
    <property type="project" value="UniProtKB"/>
</dbReference>
<dbReference type="CDD" id="cd02094">
    <property type="entry name" value="P-type_ATPase_Cu-like"/>
    <property type="match status" value="1"/>
</dbReference>
<dbReference type="FunFam" id="2.70.150.10:FF:000020">
    <property type="entry name" value="Copper-exporting P-type ATPase A"/>
    <property type="match status" value="1"/>
</dbReference>
<dbReference type="Gene3D" id="3.40.1110.10">
    <property type="entry name" value="Calcium-transporting ATPase, cytoplasmic domain N"/>
    <property type="match status" value="1"/>
</dbReference>
<dbReference type="Gene3D" id="2.70.150.10">
    <property type="entry name" value="Calcium-transporting ATPase, cytoplasmic transduction domain A"/>
    <property type="match status" value="1"/>
</dbReference>
<dbReference type="Gene3D" id="3.40.50.1000">
    <property type="entry name" value="HAD superfamily/HAD-like"/>
    <property type="match status" value="1"/>
</dbReference>
<dbReference type="InterPro" id="IPR023299">
    <property type="entry name" value="ATPase_P-typ_cyto_dom_N"/>
</dbReference>
<dbReference type="InterPro" id="IPR018303">
    <property type="entry name" value="ATPase_P-typ_P_site"/>
</dbReference>
<dbReference type="InterPro" id="IPR023298">
    <property type="entry name" value="ATPase_P-typ_TM_dom_sf"/>
</dbReference>
<dbReference type="InterPro" id="IPR008250">
    <property type="entry name" value="ATPase_P-typ_transduc_dom_A_sf"/>
</dbReference>
<dbReference type="InterPro" id="IPR036412">
    <property type="entry name" value="HAD-like_sf"/>
</dbReference>
<dbReference type="InterPro" id="IPR023214">
    <property type="entry name" value="HAD_sf"/>
</dbReference>
<dbReference type="InterPro" id="IPR045800">
    <property type="entry name" value="HMBD"/>
</dbReference>
<dbReference type="InterPro" id="IPR027256">
    <property type="entry name" value="P-typ_ATPase_IB"/>
</dbReference>
<dbReference type="InterPro" id="IPR001757">
    <property type="entry name" value="P_typ_ATPase"/>
</dbReference>
<dbReference type="InterPro" id="IPR044492">
    <property type="entry name" value="P_typ_ATPase_HD_dom"/>
</dbReference>
<dbReference type="NCBIfam" id="TIGR01511">
    <property type="entry name" value="ATPase-IB1_Cu"/>
    <property type="match status" value="1"/>
</dbReference>
<dbReference type="NCBIfam" id="TIGR01525">
    <property type="entry name" value="ATPase-IB_hvy"/>
    <property type="match status" value="1"/>
</dbReference>
<dbReference type="NCBIfam" id="TIGR01494">
    <property type="entry name" value="ATPase_P-type"/>
    <property type="match status" value="1"/>
</dbReference>
<dbReference type="PANTHER" id="PTHR43520">
    <property type="entry name" value="ATP7, ISOFORM B"/>
    <property type="match status" value="1"/>
</dbReference>
<dbReference type="PANTHER" id="PTHR43520:SF8">
    <property type="entry name" value="P-TYPE CU(+) TRANSPORTER"/>
    <property type="match status" value="1"/>
</dbReference>
<dbReference type="Pfam" id="PF00122">
    <property type="entry name" value="E1-E2_ATPase"/>
    <property type="match status" value="1"/>
</dbReference>
<dbReference type="Pfam" id="PF19335">
    <property type="entry name" value="HMBD"/>
    <property type="match status" value="1"/>
</dbReference>
<dbReference type="Pfam" id="PF00702">
    <property type="entry name" value="Hydrolase"/>
    <property type="match status" value="1"/>
</dbReference>
<dbReference type="PRINTS" id="PR00119">
    <property type="entry name" value="CATATPASE"/>
</dbReference>
<dbReference type="PRINTS" id="PR00943">
    <property type="entry name" value="CUATPASE"/>
</dbReference>
<dbReference type="SFLD" id="SFLDG00002">
    <property type="entry name" value="C1.7:_P-type_atpase_like"/>
    <property type="match status" value="1"/>
</dbReference>
<dbReference type="SFLD" id="SFLDF00027">
    <property type="entry name" value="p-type_atpase"/>
    <property type="match status" value="1"/>
</dbReference>
<dbReference type="SUPFAM" id="SSF81653">
    <property type="entry name" value="Calcium ATPase, transduction domain A"/>
    <property type="match status" value="1"/>
</dbReference>
<dbReference type="SUPFAM" id="SSF81665">
    <property type="entry name" value="Calcium ATPase, transmembrane domain M"/>
    <property type="match status" value="1"/>
</dbReference>
<dbReference type="SUPFAM" id="SSF56784">
    <property type="entry name" value="HAD-like"/>
    <property type="match status" value="1"/>
</dbReference>
<dbReference type="PROSITE" id="PS00154">
    <property type="entry name" value="ATPASE_E1_E2"/>
    <property type="match status" value="1"/>
</dbReference>